<reference key="1">
    <citation type="journal article" date="2004" name="Nat. Genet.">
        <title>Complete sequencing and characterization of 21,243 full-length human cDNAs.</title>
        <authorList>
            <person name="Ota T."/>
            <person name="Suzuki Y."/>
            <person name="Nishikawa T."/>
            <person name="Otsuki T."/>
            <person name="Sugiyama T."/>
            <person name="Irie R."/>
            <person name="Wakamatsu A."/>
            <person name="Hayashi K."/>
            <person name="Sato H."/>
            <person name="Nagai K."/>
            <person name="Kimura K."/>
            <person name="Makita H."/>
            <person name="Sekine M."/>
            <person name="Obayashi M."/>
            <person name="Nishi T."/>
            <person name="Shibahara T."/>
            <person name="Tanaka T."/>
            <person name="Ishii S."/>
            <person name="Yamamoto J."/>
            <person name="Saito K."/>
            <person name="Kawai Y."/>
            <person name="Isono Y."/>
            <person name="Nakamura Y."/>
            <person name="Nagahari K."/>
            <person name="Murakami K."/>
            <person name="Yasuda T."/>
            <person name="Iwayanagi T."/>
            <person name="Wagatsuma M."/>
            <person name="Shiratori A."/>
            <person name="Sudo H."/>
            <person name="Hosoiri T."/>
            <person name="Kaku Y."/>
            <person name="Kodaira H."/>
            <person name="Kondo H."/>
            <person name="Sugawara M."/>
            <person name="Takahashi M."/>
            <person name="Kanda K."/>
            <person name="Yokoi T."/>
            <person name="Furuya T."/>
            <person name="Kikkawa E."/>
            <person name="Omura Y."/>
            <person name="Abe K."/>
            <person name="Kamihara K."/>
            <person name="Katsuta N."/>
            <person name="Sato K."/>
            <person name="Tanikawa M."/>
            <person name="Yamazaki M."/>
            <person name="Ninomiya K."/>
            <person name="Ishibashi T."/>
            <person name="Yamashita H."/>
            <person name="Murakawa K."/>
            <person name="Fujimori K."/>
            <person name="Tanai H."/>
            <person name="Kimata M."/>
            <person name="Watanabe M."/>
            <person name="Hiraoka S."/>
            <person name="Chiba Y."/>
            <person name="Ishida S."/>
            <person name="Ono Y."/>
            <person name="Takiguchi S."/>
            <person name="Watanabe S."/>
            <person name="Yosida M."/>
            <person name="Hotuta T."/>
            <person name="Kusano J."/>
            <person name="Kanehori K."/>
            <person name="Takahashi-Fujii A."/>
            <person name="Hara H."/>
            <person name="Tanase T.-O."/>
            <person name="Nomura Y."/>
            <person name="Togiya S."/>
            <person name="Komai F."/>
            <person name="Hara R."/>
            <person name="Takeuchi K."/>
            <person name="Arita M."/>
            <person name="Imose N."/>
            <person name="Musashino K."/>
            <person name="Yuuki H."/>
            <person name="Oshima A."/>
            <person name="Sasaki N."/>
            <person name="Aotsuka S."/>
            <person name="Yoshikawa Y."/>
            <person name="Matsunawa H."/>
            <person name="Ichihara T."/>
            <person name="Shiohata N."/>
            <person name="Sano S."/>
            <person name="Moriya S."/>
            <person name="Momiyama H."/>
            <person name="Satoh N."/>
            <person name="Takami S."/>
            <person name="Terashima Y."/>
            <person name="Suzuki O."/>
            <person name="Nakagawa S."/>
            <person name="Senoh A."/>
            <person name="Mizoguchi H."/>
            <person name="Goto Y."/>
            <person name="Shimizu F."/>
            <person name="Wakebe H."/>
            <person name="Hishigaki H."/>
            <person name="Watanabe T."/>
            <person name="Sugiyama A."/>
            <person name="Takemoto M."/>
            <person name="Kawakami B."/>
            <person name="Yamazaki M."/>
            <person name="Watanabe K."/>
            <person name="Kumagai A."/>
            <person name="Itakura S."/>
            <person name="Fukuzumi Y."/>
            <person name="Fujimori Y."/>
            <person name="Komiyama M."/>
            <person name="Tashiro H."/>
            <person name="Tanigami A."/>
            <person name="Fujiwara T."/>
            <person name="Ono T."/>
            <person name="Yamada K."/>
            <person name="Fujii Y."/>
            <person name="Ozaki K."/>
            <person name="Hirao M."/>
            <person name="Ohmori Y."/>
            <person name="Kawabata A."/>
            <person name="Hikiji T."/>
            <person name="Kobatake N."/>
            <person name="Inagaki H."/>
            <person name="Ikema Y."/>
            <person name="Okamoto S."/>
            <person name="Okitani R."/>
            <person name="Kawakami T."/>
            <person name="Noguchi S."/>
            <person name="Itoh T."/>
            <person name="Shigeta K."/>
            <person name="Senba T."/>
            <person name="Matsumura K."/>
            <person name="Nakajima Y."/>
            <person name="Mizuno T."/>
            <person name="Morinaga M."/>
            <person name="Sasaki M."/>
            <person name="Togashi T."/>
            <person name="Oyama M."/>
            <person name="Hata H."/>
            <person name="Watanabe M."/>
            <person name="Komatsu T."/>
            <person name="Mizushima-Sugano J."/>
            <person name="Satoh T."/>
            <person name="Shirai Y."/>
            <person name="Takahashi Y."/>
            <person name="Nakagawa K."/>
            <person name="Okumura K."/>
            <person name="Nagase T."/>
            <person name="Nomura N."/>
            <person name="Kikuchi H."/>
            <person name="Masuho Y."/>
            <person name="Yamashita R."/>
            <person name="Nakai K."/>
            <person name="Yada T."/>
            <person name="Nakamura Y."/>
            <person name="Ohara O."/>
            <person name="Isogai T."/>
            <person name="Sugano S."/>
        </authorList>
    </citation>
    <scope>NUCLEOTIDE SEQUENCE [LARGE SCALE MRNA] (ISOFORMS 3 AND 4)</scope>
    <source>
        <tissue>Mammary gland</tissue>
    </source>
</reference>
<reference key="2">
    <citation type="journal article" date="2004" name="Proc. Natl. Acad. Sci. U.S.A.">
        <title>Large-scale cDNA transfection screening for genes related to cancer development and progression.</title>
        <authorList>
            <person name="Wan D."/>
            <person name="Gong Y."/>
            <person name="Qin W."/>
            <person name="Zhang P."/>
            <person name="Li J."/>
            <person name="Wei L."/>
            <person name="Zhou X."/>
            <person name="Li H."/>
            <person name="Qiu X."/>
            <person name="Zhong F."/>
            <person name="He L."/>
            <person name="Yu J."/>
            <person name="Yao G."/>
            <person name="Jiang H."/>
            <person name="Qian L."/>
            <person name="Yu Y."/>
            <person name="Shu H."/>
            <person name="Chen X."/>
            <person name="Xu H."/>
            <person name="Guo M."/>
            <person name="Pan Z."/>
            <person name="Chen Y."/>
            <person name="Ge C."/>
            <person name="Yang S."/>
            <person name="Gu J."/>
        </authorList>
    </citation>
    <scope>NUCLEOTIDE SEQUENCE [LARGE SCALE MRNA] (ISOFORM 3)</scope>
</reference>
<reference key="3">
    <citation type="journal article" date="2004" name="Genome Res.">
        <title>The status, quality, and expansion of the NIH full-length cDNA project: the Mammalian Gene Collection (MGC).</title>
        <authorList>
            <consortium name="The MGC Project Team"/>
        </authorList>
    </citation>
    <scope>NUCLEOTIDE SEQUENCE [LARGE SCALE MRNA] (ISOFORM 2)</scope>
    <scope>NUCLEOTIDE SEQUENCE [LARGE SCALE MRNA] OF 170-974 (ISOFORM 1)</scope>
    <source>
        <tissue>Lung</tissue>
        <tissue>Uterus</tissue>
    </source>
</reference>
<reference key="4">
    <citation type="journal article" date="2001" name="DNA Res.">
        <title>Prediction of the coding sequences of unidentified human genes. XXI. The complete sequences of 60 new cDNA clones from brain which code for large proteins.</title>
        <authorList>
            <person name="Nagase T."/>
            <person name="Kikuno R."/>
            <person name="Ohara O."/>
        </authorList>
    </citation>
    <scope>NUCLEOTIDE SEQUENCE [LARGE SCALE MRNA] OF 143-974 (ISOFORM 1)</scope>
    <source>
        <tissue>Brain</tissue>
    </source>
</reference>
<reference key="5">
    <citation type="journal article" date="2008" name="Proc. Natl. Acad. Sci. U.S.A.">
        <title>A quantitative atlas of mitotic phosphorylation.</title>
        <authorList>
            <person name="Dephoure N."/>
            <person name="Zhou C."/>
            <person name="Villen J."/>
            <person name="Beausoleil S.A."/>
            <person name="Bakalarski C.E."/>
            <person name="Elledge S.J."/>
            <person name="Gygi S.P."/>
        </authorList>
    </citation>
    <scope>PHOSPHORYLATION [LARGE SCALE ANALYSIS] AT SER-821 AND SER-822</scope>
    <scope>IDENTIFICATION BY MASS SPECTROMETRY [LARGE SCALE ANALYSIS]</scope>
    <source>
        <tissue>Cervix carcinoma</tissue>
    </source>
</reference>
<reference key="6">
    <citation type="journal article" date="2009" name="Anal. Chem.">
        <title>Lys-N and trypsin cover complementary parts of the phosphoproteome in a refined SCX-based approach.</title>
        <authorList>
            <person name="Gauci S."/>
            <person name="Helbig A.O."/>
            <person name="Slijper M."/>
            <person name="Krijgsveld J."/>
            <person name="Heck A.J."/>
            <person name="Mohammed S."/>
        </authorList>
    </citation>
    <scope>IDENTIFICATION BY MASS SPECTROMETRY [LARGE SCALE ANALYSIS]</scope>
</reference>
<reference key="7">
    <citation type="journal article" date="2009" name="Sci. Signal.">
        <title>Quantitative phosphoproteomic analysis of T cell receptor signaling reveals system-wide modulation of protein-protein interactions.</title>
        <authorList>
            <person name="Mayya V."/>
            <person name="Lundgren D.H."/>
            <person name="Hwang S.-I."/>
            <person name="Rezaul K."/>
            <person name="Wu L."/>
            <person name="Eng J.K."/>
            <person name="Rodionov V."/>
            <person name="Han D.K."/>
        </authorList>
    </citation>
    <scope>IDENTIFICATION BY MASS SPECTROMETRY [LARGE SCALE ANALYSIS]</scope>
    <source>
        <tissue>Leukemic T-cell</tissue>
    </source>
</reference>
<reference key="8">
    <citation type="journal article" date="2010" name="Sci. Signal.">
        <title>Quantitative phosphoproteomics reveals widespread full phosphorylation site occupancy during mitosis.</title>
        <authorList>
            <person name="Olsen J.V."/>
            <person name="Vermeulen M."/>
            <person name="Santamaria A."/>
            <person name="Kumar C."/>
            <person name="Miller M.L."/>
            <person name="Jensen L.J."/>
            <person name="Gnad F."/>
            <person name="Cox J."/>
            <person name="Jensen T.S."/>
            <person name="Nigg E.A."/>
            <person name="Brunak S."/>
            <person name="Mann M."/>
        </authorList>
    </citation>
    <scope>IDENTIFICATION BY MASS SPECTROMETRY [LARGE SCALE ANALYSIS]</scope>
    <source>
        <tissue>Cervix carcinoma</tissue>
    </source>
</reference>
<reference key="9">
    <citation type="journal article" date="2013" name="J. Proteome Res.">
        <title>Toward a comprehensive characterization of a human cancer cell phosphoproteome.</title>
        <authorList>
            <person name="Zhou H."/>
            <person name="Di Palma S."/>
            <person name="Preisinger C."/>
            <person name="Peng M."/>
            <person name="Polat A.N."/>
            <person name="Heck A.J."/>
            <person name="Mohammed S."/>
        </authorList>
    </citation>
    <scope>PHOSPHORYLATION [LARGE SCALE ANALYSIS] AT SER-564; SER-822 AND SER-830</scope>
    <scope>IDENTIFICATION BY MASS SPECTROMETRY [LARGE SCALE ANALYSIS]</scope>
    <source>
        <tissue>Cervix carcinoma</tissue>
        <tissue>Erythroleukemia</tissue>
    </source>
</reference>
<reference key="10">
    <citation type="journal article" date="2014" name="Cell Rep.">
        <title>The Sestrins interact with GATOR2 to negatively regulate the amino-acid-sensing pathway upstream of mTORC1.</title>
        <authorList>
            <person name="Chantranupong L."/>
            <person name="Wolfson R.L."/>
            <person name="Orozco J.M."/>
            <person name="Saxton R.A."/>
            <person name="Scaria S.M."/>
            <person name="Bar-Peled L."/>
            <person name="Spooner E."/>
            <person name="Isasa M."/>
            <person name="Gygi S.P."/>
            <person name="Sabatini D.M."/>
        </authorList>
    </citation>
    <scope>INTERACTION WITH SESN1; SESN2 AND SESN3</scope>
</reference>
<reference key="11">
    <citation type="journal article" date="2014" name="Cell Rep.">
        <title>Sestrins inhibit mTORC1 kinase activation through the GATOR complex.</title>
        <authorList>
            <person name="Parmigiani A."/>
            <person name="Nourbakhsh A."/>
            <person name="Ding B."/>
            <person name="Wang W."/>
            <person name="Kim Y.C."/>
            <person name="Akopiants K."/>
            <person name="Guan K.L."/>
            <person name="Karin M."/>
            <person name="Budanov A.V."/>
        </authorList>
    </citation>
    <scope>FUNCTION</scope>
    <scope>ACTIVITY REGULATION</scope>
    <scope>INTERACTION WITH SESN2</scope>
</reference>
<reference key="12">
    <citation type="journal article" date="2013" name="Science">
        <title>A Tumor suppressor complex with GAP activity for the Rag GTPases that signal amino acid sufficiency to mTORC1.</title>
        <authorList>
            <person name="Bar-Peled L."/>
            <person name="Chantranupong L."/>
            <person name="Cherniack A.D."/>
            <person name="Chen W.W."/>
            <person name="Ottina K.A."/>
            <person name="Grabiner B.C."/>
            <person name="Spear E.D."/>
            <person name="Carter S.L."/>
            <person name="Meyerson M."/>
            <person name="Sabatini D.M."/>
        </authorList>
    </citation>
    <scope>FUNCTION</scope>
    <scope>IDENTIFICATION IN GATOR COMPLEX</scope>
    <scope>SUBUNIT</scope>
</reference>
<reference key="13">
    <citation type="journal article" date="2014" name="J. Proteomics">
        <title>An enzyme assisted RP-RPLC approach for in-depth analysis of human liver phosphoproteome.</title>
        <authorList>
            <person name="Bian Y."/>
            <person name="Song C."/>
            <person name="Cheng K."/>
            <person name="Dong M."/>
            <person name="Wang F."/>
            <person name="Huang J."/>
            <person name="Sun D."/>
            <person name="Wang L."/>
            <person name="Ye M."/>
            <person name="Zou H."/>
        </authorList>
    </citation>
    <scope>PHOSPHORYLATION [LARGE SCALE ANALYSIS] AT SER-564</scope>
    <scope>IDENTIFICATION BY MASS SPECTROMETRY [LARGE SCALE ANALYSIS]</scope>
    <source>
        <tissue>Liver</tissue>
    </source>
</reference>
<reference key="14">
    <citation type="journal article" date="2016" name="Cell">
        <title>The CASTOR proteins are arginine sensors for the mTORC1 pathway.</title>
        <authorList>
            <person name="Chantranupong L."/>
            <person name="Scaria S.M."/>
            <person name="Saxton R.A."/>
            <person name="Gygi M.P."/>
            <person name="Shen K."/>
            <person name="Wyant G.A."/>
            <person name="Wang T."/>
            <person name="Harper J.W."/>
            <person name="Gygi S.P."/>
            <person name="Sabatini D.M."/>
        </authorList>
    </citation>
    <scope>ACTIVITY REGULATION</scope>
    <scope>INTERACTION WITH CASTOR2 AND CASTOR1</scope>
</reference>
<reference key="15">
    <citation type="journal article" date="2016" name="Nature">
        <title>Mechanism of arginine sensing by CASTOR1 upstream of mTORC1.</title>
        <authorList>
            <person name="Saxton R.A."/>
            <person name="Chantranupong L."/>
            <person name="Knockenhauer K.E."/>
            <person name="Schwartz T.U."/>
            <person name="Sabatini D.M."/>
        </authorList>
    </citation>
    <scope>FUNCTION</scope>
    <scope>ACTIVITY REGULATION</scope>
</reference>
<reference key="16">
    <citation type="journal article" date="2017" name="Nature">
        <title>KICSTOR recruits GATOR1 to the lysosome and is necessary for nutrients to regulate mTORC1.</title>
        <authorList>
            <person name="Wolfson R.L."/>
            <person name="Chantranupong L."/>
            <person name="Wyant G.A."/>
            <person name="Gu X."/>
            <person name="Orozco J.M."/>
            <person name="Shen K."/>
            <person name="Condon K.J."/>
            <person name="Petri S."/>
            <person name="Kedir J."/>
            <person name="Scaria S.M."/>
            <person name="Abu-Remaileh M."/>
            <person name="Frankel W.N."/>
            <person name="Sabatini D.M."/>
        </authorList>
    </citation>
    <scope>SUBCELLULAR LOCATION</scope>
</reference>
<reference key="17">
    <citation type="journal article" date="2023" name="Mol. Cell">
        <title>Ring domains are essential for GATOR2-dependent mTORC1 activation.</title>
        <authorList>
            <person name="Jiang C."/>
            <person name="Dai X."/>
            <person name="He S."/>
            <person name="Zhou H."/>
            <person name="Fang L."/>
            <person name="Guo J."/>
            <person name="Liu S."/>
            <person name="Zhang T."/>
            <person name="Pan W."/>
            <person name="Yu H."/>
            <person name="Fu T."/>
            <person name="Li D."/>
            <person name="Inuzuka H."/>
            <person name="Wang P."/>
            <person name="Xiao J."/>
            <person name="Wei W."/>
        </authorList>
    </citation>
    <scope>FUNCTION</scope>
    <scope>IDENTIFICATION IN GATOR2 COMPLEX</scope>
    <scope>MUTAGENESIS OF 924-CYS--CYS-927</scope>
</reference>
<reference key="18">
    <citation type="journal article" date="2023" name="Proc. Natl. Acad. Sci. U.S.A.">
        <title>Wdr59 promotes or inhibits TORC1 activity depending on cellular context.</title>
        <authorList>
            <person name="Zhang Y."/>
            <person name="Ting C.Y."/>
            <person name="Yang S."/>
            <person name="Reich J."/>
            <person name="Fru K."/>
            <person name="Lilly M.A."/>
        </authorList>
    </citation>
    <scope>FUNCTION</scope>
</reference>
<reference evidence="23" key="19">
    <citation type="journal article" date="2022" name="Nature">
        <title>Structure of the nutrient-sensing hub GATOR2.</title>
        <authorList>
            <person name="Valenstein M.L."/>
            <person name="Rogala K.B."/>
            <person name="Lalgudi P.V."/>
            <person name="Brignole E.J."/>
            <person name="Gu X."/>
            <person name="Saxton R.A."/>
            <person name="Chantranupong L."/>
            <person name="Kolibius J."/>
            <person name="Quast J.P."/>
            <person name="Sabatini D.M."/>
        </authorList>
    </citation>
    <scope>STRUCTURE BY ELECTRON MICROSCOPY (3.66 ANGSTROMS) IN COMPLEX WITH ZINC; WDR24; SEC13; MIOS AND SEH1L</scope>
    <scope>FUNCTION</scope>
    <scope>IDENTIFICATION IN GATOR2 COMPLEX</scope>
    <scope>MUTAGENESIS OF LEU-698 AND 728-LEU--LEU-732</scope>
</reference>
<evidence type="ECO:0000250" key="1">
    <source>
        <dbReference type="UniProtKB" id="Q8C0M0"/>
    </source>
</evidence>
<evidence type="ECO:0000255" key="2">
    <source>
        <dbReference type="PROSITE-ProRule" id="PRU00179"/>
    </source>
</evidence>
<evidence type="ECO:0000256" key="3">
    <source>
        <dbReference type="SAM" id="MobiDB-lite"/>
    </source>
</evidence>
<evidence type="ECO:0000269" key="4">
    <source>
    </source>
</evidence>
<evidence type="ECO:0000269" key="5">
    <source>
    </source>
</evidence>
<evidence type="ECO:0000269" key="6">
    <source>
    </source>
</evidence>
<evidence type="ECO:0000269" key="7">
    <source>
    </source>
</evidence>
<evidence type="ECO:0000269" key="8">
    <source>
    </source>
</evidence>
<evidence type="ECO:0000269" key="9">
    <source>
    </source>
</evidence>
<evidence type="ECO:0000269" key="10">
    <source>
    </source>
</evidence>
<evidence type="ECO:0000269" key="11">
    <source>
    </source>
</evidence>
<evidence type="ECO:0000269" key="12">
    <source>
    </source>
</evidence>
<evidence type="ECO:0000303" key="13">
    <source>
    </source>
</evidence>
<evidence type="ECO:0000303" key="14">
    <source>
    </source>
</evidence>
<evidence type="ECO:0000303" key="15">
    <source>
    </source>
</evidence>
<evidence type="ECO:0000303" key="16">
    <source>
    </source>
</evidence>
<evidence type="ECO:0000303" key="17">
    <source>
    </source>
</evidence>
<evidence type="ECO:0000303" key="18">
    <source>
    </source>
</evidence>
<evidence type="ECO:0000305" key="19"/>
<evidence type="ECO:0000305" key="20">
    <source>
    </source>
</evidence>
<evidence type="ECO:0000312" key="21">
    <source>
        <dbReference type="EMBL" id="AAQ15226.1"/>
    </source>
</evidence>
<evidence type="ECO:0000312" key="22">
    <source>
        <dbReference type="HGNC" id="HGNC:25706"/>
    </source>
</evidence>
<evidence type="ECO:0007744" key="23">
    <source>
        <dbReference type="PDB" id="7UHY"/>
    </source>
</evidence>
<evidence type="ECO:0007744" key="24">
    <source>
    </source>
</evidence>
<evidence type="ECO:0007744" key="25">
    <source>
    </source>
</evidence>
<evidence type="ECO:0007744" key="26">
    <source>
    </source>
</evidence>
<comment type="function">
    <text evidence="4 6 8 10 11 12">As a component of the GATOR2 complex, functions as an activator of the amino acid-sensing branch of the mTORC1 signaling pathway (PubMed:23723238, PubMed:25457612, PubMed:27487210, PubMed:35831510, PubMed:36528027, PubMed:36577058). The GATOR2 complex indirectly activates mTORC1 through the inhibition of the GATOR1 subcomplex (PubMed:23723238, PubMed:27487210, PubMed:35831510, PubMed:36528027). GATOR2 probably acts as an E3 ubiquitin-protein ligase toward GATOR1 (PubMed:36528027). In the presence of abundant amino acids, the GATOR2 complex mediates ubiquitination of the NPRL2 core component of the GATOR1 complex, leading to GATOR1 inactivation (PubMed:36528027). In the absence of amino acids, GATOR2 is inhibited, activating the GATOR1 complex (PubMed:25457612, PubMed:27487210).</text>
</comment>
<comment type="activity regulation">
    <text evidence="6 7 8">The GATOR2 complex is negatively regulated by the upstream amino acid sensors CASTOR1 and SESN2, which sequester the GATOR2 complex in absence of amino acids (PubMed:25457612, PubMed:26972053, PubMed:27487210). In the presence of abundant amino acids, GATOR2 is released from CASTOR1 and SESN2 and activated (PubMed:25457612, PubMed:26972053, PubMed:27487210).</text>
</comment>
<comment type="subunit">
    <text evidence="1 4 5 6 7 10 11">Component of the GATOR2 subcomplex, composed of MIOS, SEC13, SEH1L, WDR24 and WDR59 (PubMed:23723238, PubMed:35831510, PubMed:36528027). The GATOR2 complex interacts with CASTOR1 and CASTOR2; the interaction is negatively regulated by arginine (PubMed:26972053). The GATOR2 complex interacts with SESN1, SESN2 and SESN3; the interaction is negatively regulated by amino acids (PubMed:25263562, PubMed:25457612). Interacts with DDB1-CUL4A/B E3 ligase complexes (By similarity).</text>
</comment>
<comment type="interaction">
    <interactant intactId="EBI-2515073">
        <id>Q6PJI9</id>
    </interactant>
    <interactant intactId="EBI-10276168">
        <id>Q8WTX7</id>
        <label>CASTOR1</label>
    </interactant>
    <organismsDiffer>false</organismsDiffer>
    <experiments>8</experiments>
</comment>
<comment type="interaction">
    <interactant intactId="EBI-2515073">
        <id>Q6PJI9</id>
    </interactant>
    <interactant intactId="EBI-11102839">
        <id>A6NHX0</id>
        <label>CASTOR2</label>
    </interactant>
    <organismsDiffer>false</organismsDiffer>
    <experiments>6</experiments>
</comment>
<comment type="interaction">
    <interactant intactId="EBI-2515073">
        <id>Q6PJI9</id>
    </interactant>
    <interactant intactId="EBI-746424">
        <id>Q96S15</id>
        <label>WDR24</label>
    </interactant>
    <organismsDiffer>false</organismsDiffer>
    <experiments>8</experiments>
</comment>
<comment type="interaction">
    <interactant intactId="EBI-2515073">
        <id>Q6PJI9</id>
    </interactant>
    <interactant intactId="EBI-356498">
        <id>P62258</id>
        <label>YWHAE</label>
    </interactant>
    <organismsDiffer>false</organismsDiffer>
    <experiments>2</experiments>
</comment>
<comment type="subcellular location">
    <subcellularLocation>
        <location evidence="9">Lysosome membrane</location>
    </subcellularLocation>
</comment>
<comment type="alternative products">
    <event type="alternative splicing"/>
    <isoform>
        <id>Q6PJI9-1</id>
        <name>1</name>
        <sequence type="displayed"/>
    </isoform>
    <isoform>
        <id>Q6PJI9-2</id>
        <name>2</name>
        <sequence type="described" ref="VSP_023884"/>
    </isoform>
    <isoform>
        <id>Q6PJI9-3</id>
        <name>3</name>
        <sequence type="described" ref="VSP_023882"/>
    </isoform>
    <isoform>
        <id>Q6PJI9-4</id>
        <name>4</name>
        <sequence type="described" ref="VSP_023881 VSP_023883"/>
    </isoform>
</comment>
<comment type="similarity">
    <text evidence="19">Belongs to the WD repeat WDR59 family.</text>
</comment>
<comment type="caution">
    <text evidence="10 11">The E3 ubiquitin-protein ligase activity of the GATOR2 complex is subject to discussion (PubMed:35831510, PubMed:36528027). According to a report, the GATOR2 complex does not catalyze ubiquitination of the GATOR1 complex (PubMed:35831510). In contrast, another publication showed that the GATOR2 complex mediates ubiquitination of the NPRL2 core component of the GATOR1 complex, leading to GATOR1 inactivation (PubMed:36528027).</text>
</comment>
<comment type="sequence caution" evidence="19">
    <conflict type="frameshift">
        <sequence resource="EMBL-CDS" id="BAB67816"/>
    </conflict>
</comment>
<name>WDR59_HUMAN</name>
<sequence length="974" mass="109793">MAARWSSENVVVEFRDSQATAMSVDCLGQHAVLSGRRFLYIVNLDAPFEGHRKISRQSKWDIGAVQWNPHDSFAHYFAASSNQRVDLYKWKDGSGEVGTTLQGHTRVISDLDWAVFEPDLLVTSSVDTYIYIWDIKDTRKPTVALSAVAGASQVKWNKKNANCLATSHDGDVRIWDKRKPSTAVEYLAAHLSKIHGLDWHPDSEHILATSSQDNSVKFWDYRQPRKYLNILPCQVPVWKARYTPFSNGLVTVMVPQLRRENSLLLWNVFDLNTPVHTFVGHDDVVLEFQWRKQKEGSKDYQLVTWSRDQTLRMWRVDSQMQRLCANDILDGVDEFIESISLLPEPEKTLHTEDTDHQHTASHGEEEALKEDPPRNLLEERKSDQLGLPQTLQQEFSLINVQIRNVNVEMDAADRSCTVSVHCSNHRVKMLVKFPAQYPNNAAPSFQFINPTTITSTMKAKLLKILKDTALQKVKRGQSCLEPCLRQLVSCLESFVNQEDSASSNPFALPNSVTPPLPTFARVTTAYGSYQDANIPFPRTSGARFCGAGYLVYFTRPMTMHRAVSPTEPTPRSLSALSAYHTGLIAPMKIRTEAPGNLRLYSGSPTRSEKEQVSISSFYYKERKSRRWKSKREGSDSGNRQIKAAGKVIIQDIACLLPVHKSLGELYILNVNDIQETCQKNAASALLVGRKDLVQVWSLATVATDLCLGPKSDPDLETPWARHPFGRQLLESLLAHYCRLRDVQTLAMLCSVFEAQSRPQGLPNPFGPFPNRSSNLVVSHSRYPSFTSSGSCSSMSDPGLNTGGWNIAGREAEHLSSPWGESSPEELRFGSLTYSDPRERERDQHDKNKRLLDPANTQQFDDFKKCYGEILYRWGLREKRAEVLKFVSCPPDPHKGIEFGVYCSHCRSEVRGTQCAICKGFTFQCAICHVAVRGSSNFCLTCGHGGHTSHMMEWFRTQEVCPTGCGCHCLLESTF</sequence>
<protein>
    <recommendedName>
        <fullName evidence="19">GATOR2 complex protein WDR59</fullName>
    </recommendedName>
    <alternativeName>
        <fullName evidence="22">WD repeat-containing protein 59</fullName>
    </alternativeName>
</protein>
<accession>Q6PJI9</accession>
<accession>B3KRC3</accession>
<accession>Q71RE7</accession>
<accession>Q96PW5</accession>
<accession>Q9BSW6</accession>
<accession>Q9HA43</accession>
<gene>
    <name evidence="17 18 22" type="primary">WDR59</name>
    <name evidence="13" type="synonym">KIAA1923</name>
    <name evidence="21" type="ORF">FP977</name>
</gene>
<dbReference type="EMBL" id="AK022332">
    <property type="protein sequence ID" value="BAB14015.1"/>
    <property type="molecule type" value="mRNA"/>
</dbReference>
<dbReference type="EMBL" id="AK091316">
    <property type="protein sequence ID" value="BAG52335.1"/>
    <property type="molecule type" value="mRNA"/>
</dbReference>
<dbReference type="EMBL" id="AF370390">
    <property type="protein sequence ID" value="AAQ15226.1"/>
    <property type="molecule type" value="mRNA"/>
</dbReference>
<dbReference type="EMBL" id="BC004519">
    <property type="protein sequence ID" value="AAH04519.1"/>
    <property type="molecule type" value="mRNA"/>
</dbReference>
<dbReference type="EMBL" id="BC014887">
    <property type="protein sequence ID" value="AAH14887.2"/>
    <property type="molecule type" value="mRNA"/>
</dbReference>
<dbReference type="EMBL" id="AB067510">
    <property type="protein sequence ID" value="BAB67816.1"/>
    <property type="status" value="ALT_FRAME"/>
    <property type="molecule type" value="mRNA"/>
</dbReference>
<dbReference type="CCDS" id="CCDS32488.1">
    <molecule id="Q6PJI9-1"/>
</dbReference>
<dbReference type="CCDS" id="CCDS82011.1">
    <molecule id="Q6PJI9-2"/>
</dbReference>
<dbReference type="RefSeq" id="NP_001311100.1">
    <molecule id="Q6PJI9-2"/>
    <property type="nucleotide sequence ID" value="NM_001324171.2"/>
</dbReference>
<dbReference type="RefSeq" id="NP_085058.3">
    <molecule id="Q6PJI9-1"/>
    <property type="nucleotide sequence ID" value="NM_030581.3"/>
</dbReference>
<dbReference type="PDB" id="7UHY">
    <property type="method" value="EM"/>
    <property type="resolution" value="3.66 A"/>
    <property type="chains" value="D=1-974"/>
</dbReference>
<dbReference type="PDBsum" id="7UHY"/>
<dbReference type="EMDB" id="EMD-26519"/>
<dbReference type="SMR" id="Q6PJI9"/>
<dbReference type="BioGRID" id="122841">
    <property type="interactions" value="130"/>
</dbReference>
<dbReference type="ComplexPortal" id="CPX-6227">
    <property type="entry name" value="GATOR2 complex"/>
</dbReference>
<dbReference type="CORUM" id="Q6PJI9"/>
<dbReference type="FunCoup" id="Q6PJI9">
    <property type="interactions" value="2122"/>
</dbReference>
<dbReference type="IntAct" id="Q6PJI9">
    <property type="interactions" value="86"/>
</dbReference>
<dbReference type="MINT" id="Q6PJI9"/>
<dbReference type="STRING" id="9606.ENSP00000262144"/>
<dbReference type="GlyGen" id="Q6PJI9">
    <property type="glycosylation" value="2 sites"/>
</dbReference>
<dbReference type="iPTMnet" id="Q6PJI9"/>
<dbReference type="PhosphoSitePlus" id="Q6PJI9"/>
<dbReference type="BioMuta" id="WDR59"/>
<dbReference type="DMDM" id="134035358"/>
<dbReference type="jPOST" id="Q6PJI9"/>
<dbReference type="MassIVE" id="Q6PJI9"/>
<dbReference type="PaxDb" id="9606-ENSP00000262144"/>
<dbReference type="PeptideAtlas" id="Q6PJI9"/>
<dbReference type="ProteomicsDB" id="67210">
    <molecule id="Q6PJI9-1"/>
</dbReference>
<dbReference type="ProteomicsDB" id="67211">
    <molecule id="Q6PJI9-2"/>
</dbReference>
<dbReference type="ProteomicsDB" id="67212">
    <molecule id="Q6PJI9-3"/>
</dbReference>
<dbReference type="ProteomicsDB" id="67213">
    <molecule id="Q6PJI9-4"/>
</dbReference>
<dbReference type="Pumba" id="Q6PJI9"/>
<dbReference type="Antibodypedia" id="48159">
    <property type="antibodies" value="45 antibodies from 15 providers"/>
</dbReference>
<dbReference type="DNASU" id="79726"/>
<dbReference type="Ensembl" id="ENST00000262144.11">
    <molecule id="Q6PJI9-1"/>
    <property type="protein sequence ID" value="ENSP00000262144.6"/>
    <property type="gene ID" value="ENSG00000103091.15"/>
</dbReference>
<dbReference type="Ensembl" id="ENST00000616369.4">
    <molecule id="Q6PJI9-2"/>
    <property type="protein sequence ID" value="ENSP00000482446.1"/>
    <property type="gene ID" value="ENSG00000103091.15"/>
</dbReference>
<dbReference type="GeneID" id="79726"/>
<dbReference type="KEGG" id="hsa:79726"/>
<dbReference type="MANE-Select" id="ENST00000262144.11">
    <property type="protein sequence ID" value="ENSP00000262144.6"/>
    <property type="RefSeq nucleotide sequence ID" value="NM_030581.4"/>
    <property type="RefSeq protein sequence ID" value="NP_085058.3"/>
</dbReference>
<dbReference type="UCSC" id="uc002fdh.2">
    <molecule id="Q6PJI9-1"/>
    <property type="organism name" value="human"/>
</dbReference>
<dbReference type="AGR" id="HGNC:25706"/>
<dbReference type="CTD" id="79726"/>
<dbReference type="DisGeNET" id="79726"/>
<dbReference type="GeneCards" id="WDR59"/>
<dbReference type="HGNC" id="HGNC:25706">
    <property type="gene designation" value="WDR59"/>
</dbReference>
<dbReference type="HPA" id="ENSG00000103091">
    <property type="expression patterns" value="Low tissue specificity"/>
</dbReference>
<dbReference type="MIM" id="617418">
    <property type="type" value="gene"/>
</dbReference>
<dbReference type="neXtProt" id="NX_Q6PJI9"/>
<dbReference type="OpenTargets" id="ENSG00000103091"/>
<dbReference type="PharmGKB" id="PA142670593"/>
<dbReference type="VEuPathDB" id="HostDB:ENSG00000103091"/>
<dbReference type="eggNOG" id="KOG0264">
    <property type="taxonomic scope" value="Eukaryota"/>
</dbReference>
<dbReference type="eggNOG" id="KOG0309">
    <property type="taxonomic scope" value="Eukaryota"/>
</dbReference>
<dbReference type="GeneTree" id="ENSGT00940000157600"/>
<dbReference type="HOGENOM" id="CLU_009370_0_0_1"/>
<dbReference type="InParanoid" id="Q6PJI9"/>
<dbReference type="OMA" id="HRRETCL"/>
<dbReference type="OrthoDB" id="311712at2759"/>
<dbReference type="PAN-GO" id="Q6PJI9">
    <property type="GO annotations" value="5 GO annotations based on evolutionary models"/>
</dbReference>
<dbReference type="PhylomeDB" id="Q6PJI9"/>
<dbReference type="TreeFam" id="TF314695"/>
<dbReference type="PathwayCommons" id="Q6PJI9"/>
<dbReference type="Reactome" id="R-HSA-9639288">
    <property type="pathway name" value="Amino acids regulate mTORC1"/>
</dbReference>
<dbReference type="SignaLink" id="Q6PJI9"/>
<dbReference type="SIGNOR" id="Q6PJI9"/>
<dbReference type="BioGRID-ORCS" id="79726">
    <property type="hits" value="131 hits in 1170 CRISPR screens"/>
</dbReference>
<dbReference type="ChiTaRS" id="WDR59">
    <property type="organism name" value="human"/>
</dbReference>
<dbReference type="GenomeRNAi" id="79726"/>
<dbReference type="Pharos" id="Q6PJI9">
    <property type="development level" value="Tdark"/>
</dbReference>
<dbReference type="PRO" id="PR:Q6PJI9"/>
<dbReference type="Proteomes" id="UP000005640">
    <property type="component" value="Chromosome 16"/>
</dbReference>
<dbReference type="RNAct" id="Q6PJI9">
    <property type="molecule type" value="protein"/>
</dbReference>
<dbReference type="Bgee" id="ENSG00000103091">
    <property type="expression patterns" value="Expressed in right lobe of thyroid gland and 196 other cell types or tissues"/>
</dbReference>
<dbReference type="ExpressionAtlas" id="Q6PJI9">
    <property type="expression patterns" value="baseline and differential"/>
</dbReference>
<dbReference type="GO" id="GO:0005829">
    <property type="term" value="C:cytosol"/>
    <property type="evidence" value="ECO:0000314"/>
    <property type="project" value="HPA"/>
</dbReference>
<dbReference type="GO" id="GO:0061700">
    <property type="term" value="C:GATOR2 complex"/>
    <property type="evidence" value="ECO:0000314"/>
    <property type="project" value="UniProtKB"/>
</dbReference>
<dbReference type="GO" id="GO:0043231">
    <property type="term" value="C:intracellular membrane-bounded organelle"/>
    <property type="evidence" value="ECO:0000314"/>
    <property type="project" value="HPA"/>
</dbReference>
<dbReference type="GO" id="GO:0005765">
    <property type="term" value="C:lysosomal membrane"/>
    <property type="evidence" value="ECO:0000314"/>
    <property type="project" value="UniProtKB"/>
</dbReference>
<dbReference type="GO" id="GO:0035859">
    <property type="term" value="C:Seh1-associated complex"/>
    <property type="evidence" value="ECO:0000318"/>
    <property type="project" value="GO_Central"/>
</dbReference>
<dbReference type="GO" id="GO:0005774">
    <property type="term" value="C:vacuolar membrane"/>
    <property type="evidence" value="ECO:0000318"/>
    <property type="project" value="GO_Central"/>
</dbReference>
<dbReference type="GO" id="GO:0035591">
    <property type="term" value="F:signaling adaptor activity"/>
    <property type="evidence" value="ECO:0000318"/>
    <property type="project" value="GO_Central"/>
</dbReference>
<dbReference type="GO" id="GO:0008270">
    <property type="term" value="F:zinc ion binding"/>
    <property type="evidence" value="ECO:0007669"/>
    <property type="project" value="UniProtKB-KW"/>
</dbReference>
<dbReference type="GO" id="GO:0034198">
    <property type="term" value="P:cellular response to amino acid starvation"/>
    <property type="evidence" value="ECO:0000315"/>
    <property type="project" value="UniProtKB"/>
</dbReference>
<dbReference type="GO" id="GO:0031669">
    <property type="term" value="P:cellular response to nutrient levels"/>
    <property type="evidence" value="ECO:0000314"/>
    <property type="project" value="UniProtKB"/>
</dbReference>
<dbReference type="GO" id="GO:1904262">
    <property type="term" value="P:negative regulation of TORC1 signaling"/>
    <property type="evidence" value="ECO:0000303"/>
    <property type="project" value="ComplexPortal"/>
</dbReference>
<dbReference type="GO" id="GO:1904263">
    <property type="term" value="P:positive regulation of TORC1 signaling"/>
    <property type="evidence" value="ECO:0000314"/>
    <property type="project" value="UniProtKB"/>
</dbReference>
<dbReference type="CDD" id="cd16692">
    <property type="entry name" value="mRING-H2-C3H3C2_WDR59"/>
    <property type="match status" value="1"/>
</dbReference>
<dbReference type="FunFam" id="2.130.10.10:FF:001225">
    <property type="entry name" value="WD repeat domain 59"/>
    <property type="match status" value="1"/>
</dbReference>
<dbReference type="FunFam" id="3.10.110.10:FF:000084">
    <property type="entry name" value="WD repeat domain 59"/>
    <property type="match status" value="1"/>
</dbReference>
<dbReference type="FunFam" id="2.130.10.10:FF:000266">
    <property type="entry name" value="WD repeat-containing protein 59 isoform X1"/>
    <property type="match status" value="1"/>
</dbReference>
<dbReference type="Gene3D" id="3.10.110.10">
    <property type="entry name" value="Ubiquitin Conjugating Enzyme"/>
    <property type="match status" value="1"/>
</dbReference>
<dbReference type="Gene3D" id="2.130.10.10">
    <property type="entry name" value="YVTN repeat-like/Quinoprotein amine dehydrogenase"/>
    <property type="match status" value="2"/>
</dbReference>
<dbReference type="InterPro" id="IPR006575">
    <property type="entry name" value="RWD_dom"/>
</dbReference>
<dbReference type="InterPro" id="IPR016135">
    <property type="entry name" value="UBQ-conjugating_enzyme/RWD"/>
</dbReference>
<dbReference type="InterPro" id="IPR015943">
    <property type="entry name" value="WD40/YVTN_repeat-like_dom_sf"/>
</dbReference>
<dbReference type="InterPro" id="IPR019775">
    <property type="entry name" value="WD40_repeat_CS"/>
</dbReference>
<dbReference type="InterPro" id="IPR036322">
    <property type="entry name" value="WD40_repeat_dom_sf"/>
</dbReference>
<dbReference type="InterPro" id="IPR001680">
    <property type="entry name" value="WD40_rpt"/>
</dbReference>
<dbReference type="InterPro" id="IPR049567">
    <property type="entry name" value="WDR59-like"/>
</dbReference>
<dbReference type="InterPro" id="IPR039456">
    <property type="entry name" value="WDR59_mRING-H2-C3H3C2"/>
</dbReference>
<dbReference type="InterPro" id="IPR049566">
    <property type="entry name" value="WDR59_RTC1-like_RING_Znf"/>
</dbReference>
<dbReference type="PANTHER" id="PTHR46170">
    <property type="entry name" value="GATOR COMPLEX PROTEIN WDR59"/>
    <property type="match status" value="1"/>
</dbReference>
<dbReference type="PANTHER" id="PTHR46170:SF1">
    <property type="entry name" value="GATOR COMPLEX PROTEIN WDR59"/>
    <property type="match status" value="1"/>
</dbReference>
<dbReference type="Pfam" id="PF00400">
    <property type="entry name" value="WD40"/>
    <property type="match status" value="2"/>
</dbReference>
<dbReference type="Pfam" id="PF17120">
    <property type="entry name" value="zf-RING_16"/>
    <property type="match status" value="1"/>
</dbReference>
<dbReference type="SMART" id="SM00591">
    <property type="entry name" value="RWD"/>
    <property type="match status" value="1"/>
</dbReference>
<dbReference type="SMART" id="SM00320">
    <property type="entry name" value="WD40"/>
    <property type="match status" value="5"/>
</dbReference>
<dbReference type="SUPFAM" id="SSF54495">
    <property type="entry name" value="UBC-like"/>
    <property type="match status" value="1"/>
</dbReference>
<dbReference type="SUPFAM" id="SSF50978">
    <property type="entry name" value="WD40 repeat-like"/>
    <property type="match status" value="1"/>
</dbReference>
<dbReference type="PROSITE" id="PS50908">
    <property type="entry name" value="RWD"/>
    <property type="match status" value="1"/>
</dbReference>
<dbReference type="PROSITE" id="PS00678">
    <property type="entry name" value="WD_REPEATS_1"/>
    <property type="match status" value="1"/>
</dbReference>
<dbReference type="PROSITE" id="PS50082">
    <property type="entry name" value="WD_REPEATS_2"/>
    <property type="match status" value="2"/>
</dbReference>
<dbReference type="PROSITE" id="PS50294">
    <property type="entry name" value="WD_REPEATS_REGION"/>
    <property type="match status" value="1"/>
</dbReference>
<keyword id="KW-0002">3D-structure</keyword>
<keyword id="KW-0025">Alternative splicing</keyword>
<keyword id="KW-0458">Lysosome</keyword>
<keyword id="KW-0472">Membrane</keyword>
<keyword id="KW-0479">Metal-binding</keyword>
<keyword id="KW-0597">Phosphoprotein</keyword>
<keyword id="KW-1267">Proteomics identification</keyword>
<keyword id="KW-1185">Reference proteome</keyword>
<keyword id="KW-0677">Repeat</keyword>
<keyword id="KW-0853">WD repeat</keyword>
<keyword id="KW-0862">Zinc</keyword>
<keyword id="KW-0863">Zinc-finger</keyword>
<proteinExistence type="evidence at protein level"/>
<feature type="chain" id="PRO_0000280721" description="GATOR2 complex protein WDR59">
    <location>
        <begin position="1"/>
        <end position="974"/>
    </location>
</feature>
<feature type="repeat" description="WD 1">
    <location>
        <begin position="57"/>
        <end position="98"/>
    </location>
</feature>
<feature type="repeat" description="WD 2">
    <location>
        <begin position="103"/>
        <end position="143"/>
    </location>
</feature>
<feature type="repeat" description="WD 3">
    <location>
        <begin position="146"/>
        <end position="185"/>
    </location>
</feature>
<feature type="repeat" description="WD 4">
    <location>
        <begin position="189"/>
        <end position="229"/>
    </location>
</feature>
<feature type="repeat" description="WD 5">
    <location>
        <begin position="232"/>
        <end position="276"/>
    </location>
</feature>
<feature type="repeat" description="WD 6">
    <location>
        <begin position="278"/>
        <end position="318"/>
    </location>
</feature>
<feature type="repeat" description="WD 7">
    <location>
        <begin position="319"/>
        <end position="362"/>
    </location>
</feature>
<feature type="domain" description="RWD" evidence="2">
    <location>
        <begin position="393"/>
        <end position="494"/>
    </location>
</feature>
<feature type="repeat" description="WD 8">
    <location>
        <begin position="668"/>
        <end position="706"/>
    </location>
</feature>
<feature type="zinc finger region" description="C4-type" evidence="20">
    <location>
        <begin position="901"/>
        <end position="920"/>
    </location>
</feature>
<feature type="zinc finger region" description="RING-type; atypical" evidence="20">
    <location>
        <begin position="921"/>
        <end position="973"/>
    </location>
</feature>
<feature type="region of interest" description="Disordered" evidence="3">
    <location>
        <begin position="350"/>
        <end position="374"/>
    </location>
</feature>
<feature type="region of interest" description="Disordered" evidence="3">
    <location>
        <begin position="831"/>
        <end position="852"/>
    </location>
</feature>
<feature type="compositionally biased region" description="Basic and acidic residues" evidence="3">
    <location>
        <begin position="835"/>
        <end position="851"/>
    </location>
</feature>
<feature type="binding site" evidence="10 23">
    <location>
        <position position="902"/>
    </location>
    <ligand>
        <name>Zn(2+)</name>
        <dbReference type="ChEBI" id="CHEBI:29105"/>
        <label>1</label>
    </ligand>
</feature>
<feature type="binding site" evidence="10 23">
    <location>
        <position position="905"/>
    </location>
    <ligand>
        <name>Zn(2+)</name>
        <dbReference type="ChEBI" id="CHEBI:29105"/>
        <label>1</label>
    </ligand>
</feature>
<feature type="binding site" evidence="10 23">
    <location>
        <position position="914"/>
    </location>
    <ligand>
        <name>Zn(2+)</name>
        <dbReference type="ChEBI" id="CHEBI:29105"/>
        <label>1</label>
    </ligand>
</feature>
<feature type="binding site" evidence="10 23">
    <location>
        <position position="917"/>
    </location>
    <ligand>
        <name>Zn(2+)</name>
        <dbReference type="ChEBI" id="CHEBI:29105"/>
        <label>1</label>
    </ligand>
</feature>
<feature type="binding site" evidence="10 23">
    <location>
        <position position="927"/>
    </location>
    <ligand>
        <name>Zn(2+)</name>
        <dbReference type="ChEBI" id="CHEBI:29105"/>
        <label>2</label>
    </ligand>
</feature>
<feature type="binding site" evidence="10 23">
    <location>
        <position position="938"/>
    </location>
    <ligand>
        <name>Zn(2+)</name>
        <dbReference type="ChEBI" id="CHEBI:29105"/>
        <label>3</label>
    </ligand>
</feature>
<feature type="binding site" evidence="10 23">
    <location>
        <position position="943"/>
    </location>
    <ligand>
        <name>Zn(2+)</name>
        <dbReference type="ChEBI" id="CHEBI:29105"/>
        <label>4</label>
    </ligand>
</feature>
<feature type="binding site" evidence="10 23">
    <location>
        <position position="946"/>
    </location>
    <ligand>
        <name>Zn(2+)</name>
        <dbReference type="ChEBI" id="CHEBI:29105"/>
        <label>2</label>
    </ligand>
</feature>
<feature type="binding site" evidence="10 23">
    <location>
        <position position="949"/>
    </location>
    <ligand>
        <name>Zn(2+)</name>
        <dbReference type="ChEBI" id="CHEBI:29105"/>
        <label>2</label>
    </ligand>
</feature>
<feature type="binding site" evidence="10 23">
    <location>
        <position position="960"/>
    </location>
    <ligand>
        <name>Zn(2+)</name>
        <dbReference type="ChEBI" id="CHEBI:29105"/>
        <label>4</label>
    </ligand>
</feature>
<feature type="binding site" evidence="10 23">
    <location>
        <position position="964"/>
    </location>
    <ligand>
        <name>Zn(2+)</name>
        <dbReference type="ChEBI" id="CHEBI:29105"/>
        <label>4</label>
    </ligand>
</feature>
<feature type="binding site" evidence="10 23">
    <location>
        <position position="966"/>
    </location>
    <ligand>
        <name>Zn(2+)</name>
        <dbReference type="ChEBI" id="CHEBI:29105"/>
        <label>3</label>
    </ligand>
</feature>
<feature type="binding site" evidence="10 23">
    <location>
        <position position="968"/>
    </location>
    <ligand>
        <name>Zn(2+)</name>
        <dbReference type="ChEBI" id="CHEBI:29105"/>
        <label>3</label>
    </ligand>
</feature>
<feature type="modified residue" description="Phosphoserine" evidence="25 26">
    <location>
        <position position="564"/>
    </location>
</feature>
<feature type="modified residue" description="Phosphoserine" evidence="24">
    <location>
        <position position="821"/>
    </location>
</feature>
<feature type="modified residue" description="Phosphoserine" evidence="24 25">
    <location>
        <position position="822"/>
    </location>
</feature>
<feature type="modified residue" description="Phosphoserine" evidence="25">
    <location>
        <position position="830"/>
    </location>
</feature>
<feature type="splice variant" id="VSP_023881" description="In isoform 4." evidence="14">
    <location>
        <begin position="1"/>
        <end position="556"/>
    </location>
</feature>
<feature type="splice variant" id="VSP_023882" description="In isoform 3." evidence="14 16">
    <location>
        <begin position="1"/>
        <end position="408"/>
    </location>
</feature>
<feature type="splice variant" id="VSP_023883" description="In isoform 4." evidence="14">
    <original>MTMHRAVSPTEPTPR</original>
    <variation>MTGLQPVWIIIIFNYR</variation>
    <location>
        <begin position="557"/>
        <end position="571"/>
    </location>
</feature>
<feature type="splice variant" id="VSP_023884" description="In isoform 2." evidence="15">
    <location>
        <begin position="572"/>
        <end position="974"/>
    </location>
</feature>
<feature type="sequence variant" id="VAR_053436" description="In dbSNP:rs11557260.">
    <original>P</original>
    <variation>T</variation>
    <location>
        <position position="201"/>
    </location>
</feature>
<feature type="mutagenesis site" description="Abolished interaction with WDR24 and assembly of the GATOR2 complex; when associated with 728-E--E-732." evidence="10">
    <original>L</original>
    <variation>E</variation>
    <location>
        <position position="698"/>
    </location>
</feature>
<feature type="mutagenesis site" description="Abolished interaction with WDR24 and assembly of the GATOR2 complex; when associated with E-698." evidence="10">
    <original>LLESL</original>
    <variation>ELESE</variation>
    <location>
        <begin position="728"/>
        <end position="732"/>
    </location>
</feature>
<feature type="mutagenesis site" description="Impaired amino-acid-mediated mTORC1 activation." evidence="11">
    <original>CAIC</original>
    <variation>AAIA</variation>
    <location>
        <begin position="924"/>
        <end position="927"/>
    </location>
</feature>
<feature type="sequence conflict" description="In Ref. 4; BAB67816." evidence="19" ref="4">
    <original>A</original>
    <variation>S</variation>
    <location>
        <position position="441"/>
    </location>
</feature>
<organism>
    <name type="scientific">Homo sapiens</name>
    <name type="common">Human</name>
    <dbReference type="NCBI Taxonomy" id="9606"/>
    <lineage>
        <taxon>Eukaryota</taxon>
        <taxon>Metazoa</taxon>
        <taxon>Chordata</taxon>
        <taxon>Craniata</taxon>
        <taxon>Vertebrata</taxon>
        <taxon>Euteleostomi</taxon>
        <taxon>Mammalia</taxon>
        <taxon>Eutheria</taxon>
        <taxon>Euarchontoglires</taxon>
        <taxon>Primates</taxon>
        <taxon>Haplorrhini</taxon>
        <taxon>Catarrhini</taxon>
        <taxon>Hominidae</taxon>
        <taxon>Homo</taxon>
    </lineage>
</organism>